<comment type="function">
    <text evidence="1">Fluoride-specific ion channel. Important for reducing fluoride concentration in the cell, thus reducing its toxicity.</text>
</comment>
<comment type="catalytic activity">
    <reaction evidence="1">
        <text>fluoride(in) = fluoride(out)</text>
        <dbReference type="Rhea" id="RHEA:76159"/>
        <dbReference type="ChEBI" id="CHEBI:17051"/>
    </reaction>
    <physiologicalReaction direction="left-to-right" evidence="1">
        <dbReference type="Rhea" id="RHEA:76160"/>
    </physiologicalReaction>
</comment>
<comment type="activity regulation">
    <text evidence="1">Na(+) is not transported, but it plays an essential structural role and its presence is essential for fluoride channel function.</text>
</comment>
<comment type="subcellular location">
    <subcellularLocation>
        <location evidence="1">Cell inner membrane</location>
        <topology evidence="1">Multi-pass membrane protein</topology>
    </subcellularLocation>
</comment>
<comment type="similarity">
    <text evidence="1">Belongs to the fluoride channel Fluc/FEX (TC 1.A.43) family.</text>
</comment>
<name>FLUC_XYLF2</name>
<gene>
    <name evidence="1" type="primary">fluC</name>
    <name evidence="1" type="synonym">crcB</name>
    <name type="ordered locus">XfasM23_0708</name>
</gene>
<accession>B2I9Z0</accession>
<keyword id="KW-0997">Cell inner membrane</keyword>
<keyword id="KW-1003">Cell membrane</keyword>
<keyword id="KW-0407">Ion channel</keyword>
<keyword id="KW-0406">Ion transport</keyword>
<keyword id="KW-0472">Membrane</keyword>
<keyword id="KW-0479">Metal-binding</keyword>
<keyword id="KW-0915">Sodium</keyword>
<keyword id="KW-0812">Transmembrane</keyword>
<keyword id="KW-1133">Transmembrane helix</keyword>
<keyword id="KW-0813">Transport</keyword>
<protein>
    <recommendedName>
        <fullName evidence="1">Fluoride-specific ion channel FluC</fullName>
    </recommendedName>
</protein>
<feature type="chain" id="PRO_1000125165" description="Fluoride-specific ion channel FluC">
    <location>
        <begin position="1"/>
        <end position="133"/>
    </location>
</feature>
<feature type="transmembrane region" description="Helical" evidence="1">
    <location>
        <begin position="3"/>
        <end position="23"/>
    </location>
</feature>
<feature type="transmembrane region" description="Helical" evidence="1">
    <location>
        <begin position="41"/>
        <end position="61"/>
    </location>
</feature>
<feature type="transmembrane region" description="Helical" evidence="1">
    <location>
        <begin position="76"/>
        <end position="96"/>
    </location>
</feature>
<feature type="transmembrane region" description="Helical" evidence="1">
    <location>
        <begin position="103"/>
        <end position="123"/>
    </location>
</feature>
<feature type="binding site" evidence="1">
    <location>
        <position position="81"/>
    </location>
    <ligand>
        <name>Na(+)</name>
        <dbReference type="ChEBI" id="CHEBI:29101"/>
        <note>structural</note>
    </ligand>
</feature>
<feature type="binding site" evidence="1">
    <location>
        <position position="84"/>
    </location>
    <ligand>
        <name>Na(+)</name>
        <dbReference type="ChEBI" id="CHEBI:29101"/>
        <note>structural</note>
    </ligand>
</feature>
<organism>
    <name type="scientific">Xylella fastidiosa (strain M23)</name>
    <dbReference type="NCBI Taxonomy" id="405441"/>
    <lineage>
        <taxon>Bacteria</taxon>
        <taxon>Pseudomonadati</taxon>
        <taxon>Pseudomonadota</taxon>
        <taxon>Gammaproteobacteria</taxon>
        <taxon>Lysobacterales</taxon>
        <taxon>Lysobacteraceae</taxon>
        <taxon>Xylella</taxon>
    </lineage>
</organism>
<reference key="1">
    <citation type="journal article" date="2010" name="J. Bacteriol.">
        <title>Whole genome sequences of two Xylella fastidiosa strains (M12 and M23) causing almond leaf scorch disease in California.</title>
        <authorList>
            <person name="Chen J."/>
            <person name="Xie G."/>
            <person name="Han S."/>
            <person name="Chertkov O."/>
            <person name="Sims D."/>
            <person name="Civerolo E.L."/>
        </authorList>
    </citation>
    <scope>NUCLEOTIDE SEQUENCE [LARGE SCALE GENOMIC DNA]</scope>
    <source>
        <strain>M23</strain>
    </source>
</reference>
<evidence type="ECO:0000255" key="1">
    <source>
        <dbReference type="HAMAP-Rule" id="MF_00454"/>
    </source>
</evidence>
<sequence>MNAVVWWQSLLLVMLGGAFGSGLRFVIGSCLLQRFGAGFPWGTLAVNLIGSFVAGFLLIWVDKRGSAGWSWRMLLIVGLIGGLTTFSSLMVECLVFVRSERSLIVGFYLCITLLFGLLFVFLGARLGAFVCDD</sequence>
<proteinExistence type="inferred from homology"/>
<dbReference type="EMBL" id="CP001011">
    <property type="protein sequence ID" value="ACB92149.1"/>
    <property type="molecule type" value="Genomic_DNA"/>
</dbReference>
<dbReference type="RefSeq" id="WP_004089119.1">
    <property type="nucleotide sequence ID" value="NC_010577.1"/>
</dbReference>
<dbReference type="SMR" id="B2I9Z0"/>
<dbReference type="GeneID" id="93904452"/>
<dbReference type="KEGG" id="xfn:XfasM23_0708"/>
<dbReference type="HOGENOM" id="CLU_114342_2_3_6"/>
<dbReference type="Proteomes" id="UP000001698">
    <property type="component" value="Chromosome"/>
</dbReference>
<dbReference type="GO" id="GO:0005886">
    <property type="term" value="C:plasma membrane"/>
    <property type="evidence" value="ECO:0007669"/>
    <property type="project" value="UniProtKB-SubCell"/>
</dbReference>
<dbReference type="GO" id="GO:0062054">
    <property type="term" value="F:fluoride channel activity"/>
    <property type="evidence" value="ECO:0007669"/>
    <property type="project" value="UniProtKB-UniRule"/>
</dbReference>
<dbReference type="GO" id="GO:0046872">
    <property type="term" value="F:metal ion binding"/>
    <property type="evidence" value="ECO:0007669"/>
    <property type="project" value="UniProtKB-KW"/>
</dbReference>
<dbReference type="GO" id="GO:0140114">
    <property type="term" value="P:cellular detoxification of fluoride"/>
    <property type="evidence" value="ECO:0007669"/>
    <property type="project" value="UniProtKB-UniRule"/>
</dbReference>
<dbReference type="HAMAP" id="MF_00454">
    <property type="entry name" value="FluC"/>
    <property type="match status" value="1"/>
</dbReference>
<dbReference type="InterPro" id="IPR003691">
    <property type="entry name" value="FluC"/>
</dbReference>
<dbReference type="NCBIfam" id="NF010814">
    <property type="entry name" value="PRK14218.1"/>
    <property type="match status" value="1"/>
</dbReference>
<dbReference type="PANTHER" id="PTHR28259">
    <property type="entry name" value="FLUORIDE EXPORT PROTEIN 1-RELATED"/>
    <property type="match status" value="1"/>
</dbReference>
<dbReference type="PANTHER" id="PTHR28259:SF18">
    <property type="entry name" value="FLUORIDE-SPECIFIC ION CHANNEL FLUC"/>
    <property type="match status" value="1"/>
</dbReference>
<dbReference type="Pfam" id="PF02537">
    <property type="entry name" value="CRCB"/>
    <property type="match status" value="1"/>
</dbReference>